<accession>Q8RYD3</accession>
<accession>A0A1I9LT58</accession>
<accession>Q3EB83</accession>
<accession>Q9CAX0</accession>
<dbReference type="EMBL" id="AJ441076">
    <property type="protein sequence ID" value="CAD29644.1"/>
    <property type="molecule type" value="mRNA"/>
</dbReference>
<dbReference type="EMBL" id="AC008153">
    <property type="protein sequence ID" value="AAG51450.1"/>
    <property type="status" value="ALT_SEQ"/>
    <property type="molecule type" value="Genomic_DNA"/>
</dbReference>
<dbReference type="EMBL" id="CP002686">
    <property type="protein sequence ID" value="AEE75068.1"/>
    <property type="molecule type" value="Genomic_DNA"/>
</dbReference>
<dbReference type="EMBL" id="CP002686">
    <property type="protein sequence ID" value="AEE75069.1"/>
    <property type="molecule type" value="Genomic_DNA"/>
</dbReference>
<dbReference type="EMBL" id="CP002686">
    <property type="protein sequence ID" value="ANM65766.1"/>
    <property type="molecule type" value="Genomic_DNA"/>
</dbReference>
<dbReference type="EMBL" id="CP002686">
    <property type="protein sequence ID" value="ANM65767.1"/>
    <property type="molecule type" value="Genomic_DNA"/>
</dbReference>
<dbReference type="EMBL" id="AK175281">
    <property type="protein sequence ID" value="BAD43044.1"/>
    <property type="molecule type" value="mRNA"/>
</dbReference>
<dbReference type="EMBL" id="BT029371">
    <property type="protein sequence ID" value="ABK32185.1"/>
    <property type="molecule type" value="mRNA"/>
</dbReference>
<dbReference type="RefSeq" id="NP_001319524.1">
    <molecule id="Q8RYD3-2"/>
    <property type="nucleotide sequence ID" value="NM_001337938.1"/>
</dbReference>
<dbReference type="RefSeq" id="NP_001327713.1">
    <molecule id="Q8RYD3-2"/>
    <property type="nucleotide sequence ID" value="NM_001337940.1"/>
</dbReference>
<dbReference type="RefSeq" id="NP_187765.2">
    <molecule id="Q8RYD3-1"/>
    <property type="nucleotide sequence ID" value="NM_111991.5"/>
</dbReference>
<dbReference type="RefSeq" id="NP_850559.1">
    <molecule id="Q8RYD3-2"/>
    <property type="nucleotide sequence ID" value="NM_180228.3"/>
</dbReference>
<dbReference type="SMR" id="Q8RYD3"/>
<dbReference type="BioGRID" id="5665">
    <property type="interactions" value="18"/>
</dbReference>
<dbReference type="FunCoup" id="Q8RYD3">
    <property type="interactions" value="66"/>
</dbReference>
<dbReference type="IntAct" id="Q8RYD3">
    <property type="interactions" value="19"/>
</dbReference>
<dbReference type="STRING" id="3702.Q8RYD3"/>
<dbReference type="PaxDb" id="3702-AT3G11580.1"/>
<dbReference type="EnsemblPlants" id="AT3G11580.1">
    <molecule id="Q8RYD3-1"/>
    <property type="protein sequence ID" value="AT3G11580.1"/>
    <property type="gene ID" value="AT3G11580"/>
</dbReference>
<dbReference type="EnsemblPlants" id="AT3G11580.2">
    <molecule id="Q8RYD3-2"/>
    <property type="protein sequence ID" value="AT3G11580.2"/>
    <property type="gene ID" value="AT3G11580"/>
</dbReference>
<dbReference type="EnsemblPlants" id="AT3G11580.4">
    <molecule id="Q8RYD3-2"/>
    <property type="protein sequence ID" value="AT3G11580.4"/>
    <property type="gene ID" value="AT3G11580"/>
</dbReference>
<dbReference type="EnsemblPlants" id="AT3G11580.5">
    <molecule id="Q8RYD3-2"/>
    <property type="protein sequence ID" value="AT3G11580.5"/>
    <property type="gene ID" value="AT3G11580"/>
</dbReference>
<dbReference type="GeneID" id="820331"/>
<dbReference type="Gramene" id="AT3G11580.1">
    <molecule id="Q8RYD3-1"/>
    <property type="protein sequence ID" value="AT3G11580.1"/>
    <property type="gene ID" value="AT3G11580"/>
</dbReference>
<dbReference type="Gramene" id="AT3G11580.2">
    <molecule id="Q8RYD3-2"/>
    <property type="protein sequence ID" value="AT3G11580.2"/>
    <property type="gene ID" value="AT3G11580"/>
</dbReference>
<dbReference type="Gramene" id="AT3G11580.4">
    <molecule id="Q8RYD3-2"/>
    <property type="protein sequence ID" value="AT3G11580.4"/>
    <property type="gene ID" value="AT3G11580"/>
</dbReference>
<dbReference type="Gramene" id="AT3G11580.5">
    <molecule id="Q8RYD3-2"/>
    <property type="protein sequence ID" value="AT3G11580.5"/>
    <property type="gene ID" value="AT3G11580"/>
</dbReference>
<dbReference type="KEGG" id="ath:AT3G11580"/>
<dbReference type="Araport" id="AT3G11580"/>
<dbReference type="TAIR" id="AT3G11580">
    <property type="gene designation" value="NGAL2"/>
</dbReference>
<dbReference type="eggNOG" id="ENOG502R9U7">
    <property type="taxonomic scope" value="Eukaryota"/>
</dbReference>
<dbReference type="HOGENOM" id="CLU_038898_3_1_1"/>
<dbReference type="InParanoid" id="Q8RYD3"/>
<dbReference type="OMA" id="HHNEHKE"/>
<dbReference type="OrthoDB" id="2020802at2759"/>
<dbReference type="PhylomeDB" id="Q8RYD3"/>
<dbReference type="PRO" id="PR:Q8RYD3"/>
<dbReference type="Proteomes" id="UP000006548">
    <property type="component" value="Chromosome 3"/>
</dbReference>
<dbReference type="ExpressionAtlas" id="Q8RYD3">
    <property type="expression patterns" value="baseline and differential"/>
</dbReference>
<dbReference type="GO" id="GO:0005634">
    <property type="term" value="C:nucleus"/>
    <property type="evidence" value="ECO:0000314"/>
    <property type="project" value="TAIR"/>
</dbReference>
<dbReference type="GO" id="GO:0003700">
    <property type="term" value="F:DNA-binding transcription factor activity"/>
    <property type="evidence" value="ECO:0000353"/>
    <property type="project" value="TAIR"/>
</dbReference>
<dbReference type="GO" id="GO:0043565">
    <property type="term" value="F:sequence-specific DNA binding"/>
    <property type="evidence" value="ECO:0000314"/>
    <property type="project" value="TAIR"/>
</dbReference>
<dbReference type="GO" id="GO:0000976">
    <property type="term" value="F:transcription cis-regulatory region binding"/>
    <property type="evidence" value="ECO:0000353"/>
    <property type="project" value="TAIR"/>
</dbReference>
<dbReference type="GO" id="GO:0019760">
    <property type="term" value="P:glucosinolate metabolic process"/>
    <property type="evidence" value="ECO:0000315"/>
    <property type="project" value="TAIR"/>
</dbReference>
<dbReference type="GO" id="GO:0080113">
    <property type="term" value="P:regulation of seed growth"/>
    <property type="evidence" value="ECO:0000315"/>
    <property type="project" value="TAIR"/>
</dbReference>
<dbReference type="CDD" id="cd10017">
    <property type="entry name" value="B3_DNA"/>
    <property type="match status" value="1"/>
</dbReference>
<dbReference type="FunFam" id="2.40.330.10:FF:000002">
    <property type="entry name" value="B3 domain-containing protein"/>
    <property type="match status" value="1"/>
</dbReference>
<dbReference type="Gene3D" id="2.40.330.10">
    <property type="entry name" value="DNA-binding pseudobarrel domain"/>
    <property type="match status" value="1"/>
</dbReference>
<dbReference type="InterPro" id="IPR003340">
    <property type="entry name" value="B3_DNA-bd"/>
</dbReference>
<dbReference type="InterPro" id="IPR015300">
    <property type="entry name" value="DNA-bd_pseudobarrel_sf"/>
</dbReference>
<dbReference type="InterPro" id="IPR044800">
    <property type="entry name" value="LEC2-like"/>
</dbReference>
<dbReference type="PANTHER" id="PTHR31140">
    <property type="entry name" value="B3 DOMAIN-CONTAINING TRANSCRIPTION FACTOR ABI3"/>
    <property type="match status" value="1"/>
</dbReference>
<dbReference type="PANTHER" id="PTHR31140:SF103">
    <property type="entry name" value="TF-B3 DOMAIN-CONTAINING PROTEIN"/>
    <property type="match status" value="1"/>
</dbReference>
<dbReference type="Pfam" id="PF02362">
    <property type="entry name" value="B3"/>
    <property type="match status" value="1"/>
</dbReference>
<dbReference type="SMART" id="SM01019">
    <property type="entry name" value="B3"/>
    <property type="match status" value="1"/>
</dbReference>
<dbReference type="SUPFAM" id="SSF101936">
    <property type="entry name" value="DNA-binding pseudobarrel domain"/>
    <property type="match status" value="1"/>
</dbReference>
<dbReference type="PROSITE" id="PS50863">
    <property type="entry name" value="B3"/>
    <property type="match status" value="1"/>
</dbReference>
<name>Y3158_ARATH</name>
<evidence type="ECO:0000255" key="1">
    <source>
        <dbReference type="PROSITE-ProRule" id="PRU00326"/>
    </source>
</evidence>
<evidence type="ECO:0000303" key="2">
    <source ref="5"/>
</evidence>
<evidence type="ECO:0000305" key="3"/>
<sequence length="267" mass="30217">MSVNHYHNTLSLHHHHQNDVAIAQRESLFEKSLTPSDVGKLNRLVIPKQHAEKYFPLNNNNNNGGSGDDVATTEKGMLLSFEDESGKCWKFRYSYWNSSQSYVLTKGWSRYVKDKHLDAGDVVFFQRHRFDLHRLFIGWRRRGEASSSPAVSVVSQEALVNTTAYWSGLTTPYRQVHASTTYPNIHQEYSHYGAVVDHAQSIPPVVAGSSRTVRLFGVNLECHGDAVEPPPRPDVYNDQHIYYYSTPHPMNISFAGEALEQVGDGRG</sequence>
<proteinExistence type="evidence at transcript level"/>
<feature type="chain" id="PRO_0000375137" description="B3 domain-containing protein At3g11580">
    <location>
        <begin position="1"/>
        <end position="267"/>
    </location>
</feature>
<feature type="DNA-binding region" description="TF-B3" evidence="1">
    <location>
        <begin position="29"/>
        <end position="143"/>
    </location>
</feature>
<feature type="splice variant" id="VSP_037334" description="In isoform 2." evidence="2">
    <original>AVVDHAQSIPPVVAGSSRTVRLFGVNLECHGDAVEPP</original>
    <variation>KFKPFISSFVFSFSLIYMSDLYSSLFSFKICLFHKNR</variation>
    <location>
        <begin position="194"/>
        <end position="230"/>
    </location>
</feature>
<feature type="splice variant" id="VSP_037335" description="In isoform 2." evidence="2">
    <location>
        <begin position="231"/>
        <end position="267"/>
    </location>
</feature>
<keyword id="KW-0025">Alternative splicing</keyword>
<keyword id="KW-0238">DNA-binding</keyword>
<keyword id="KW-0539">Nucleus</keyword>
<keyword id="KW-1185">Reference proteome</keyword>
<keyword id="KW-0804">Transcription</keyword>
<keyword id="KW-0805">Transcription regulation</keyword>
<organism>
    <name type="scientific">Arabidopsis thaliana</name>
    <name type="common">Mouse-ear cress</name>
    <dbReference type="NCBI Taxonomy" id="3702"/>
    <lineage>
        <taxon>Eukaryota</taxon>
        <taxon>Viridiplantae</taxon>
        <taxon>Streptophyta</taxon>
        <taxon>Embryophyta</taxon>
        <taxon>Tracheophyta</taxon>
        <taxon>Spermatophyta</taxon>
        <taxon>Magnoliopsida</taxon>
        <taxon>eudicotyledons</taxon>
        <taxon>Gunneridae</taxon>
        <taxon>Pentapetalae</taxon>
        <taxon>rosids</taxon>
        <taxon>malvids</taxon>
        <taxon>Brassicales</taxon>
        <taxon>Brassicaceae</taxon>
        <taxon>Camelineae</taxon>
        <taxon>Arabidopsis</taxon>
    </lineage>
</organism>
<gene>
    <name type="primary">ARF32</name>
    <name type="ordered locus">At3g11580</name>
    <name type="ORF">F24K9.25</name>
</gene>
<protein>
    <recommendedName>
        <fullName>B3 domain-containing protein At3g11580</fullName>
    </recommendedName>
    <alternativeName>
        <fullName>Protein AUXIN RESPONSE FACTOR 32</fullName>
    </alternativeName>
</protein>
<reference key="1">
    <citation type="submission" date="2002-04" db="EMBL/GenBank/DDBJ databases">
        <title>Nucleotide sequence of the putative Arabidopsis ARF32.</title>
        <authorList>
            <person name="Carabelli M."/>
            <person name="Ciarbelli A.R."/>
            <person name="Ruzza V."/>
            <person name="Sessa G."/>
            <person name="Steindler C."/>
            <person name="Ruberti I."/>
        </authorList>
    </citation>
    <scope>NUCLEOTIDE SEQUENCE [MRNA] (ISOFORM 1)</scope>
    <source>
        <strain>cv. Columbia</strain>
    </source>
</reference>
<reference key="2">
    <citation type="journal article" date="2000" name="Nature">
        <title>Sequence and analysis of chromosome 3 of the plant Arabidopsis thaliana.</title>
        <authorList>
            <person name="Salanoubat M."/>
            <person name="Lemcke K."/>
            <person name="Rieger M."/>
            <person name="Ansorge W."/>
            <person name="Unseld M."/>
            <person name="Fartmann B."/>
            <person name="Valle G."/>
            <person name="Bloecker H."/>
            <person name="Perez-Alonso M."/>
            <person name="Obermaier B."/>
            <person name="Delseny M."/>
            <person name="Boutry M."/>
            <person name="Grivell L.A."/>
            <person name="Mache R."/>
            <person name="Puigdomenech P."/>
            <person name="De Simone V."/>
            <person name="Choisne N."/>
            <person name="Artiguenave F."/>
            <person name="Robert C."/>
            <person name="Brottier P."/>
            <person name="Wincker P."/>
            <person name="Cattolico L."/>
            <person name="Weissenbach J."/>
            <person name="Saurin W."/>
            <person name="Quetier F."/>
            <person name="Schaefer M."/>
            <person name="Mueller-Auer S."/>
            <person name="Gabel C."/>
            <person name="Fuchs M."/>
            <person name="Benes V."/>
            <person name="Wurmbach E."/>
            <person name="Drzonek H."/>
            <person name="Erfle H."/>
            <person name="Jordan N."/>
            <person name="Bangert S."/>
            <person name="Wiedelmann R."/>
            <person name="Kranz H."/>
            <person name="Voss H."/>
            <person name="Holland R."/>
            <person name="Brandt P."/>
            <person name="Nyakatura G."/>
            <person name="Vezzi A."/>
            <person name="D'Angelo M."/>
            <person name="Pallavicini A."/>
            <person name="Toppo S."/>
            <person name="Simionati B."/>
            <person name="Conrad A."/>
            <person name="Hornischer K."/>
            <person name="Kauer G."/>
            <person name="Loehnert T.-H."/>
            <person name="Nordsiek G."/>
            <person name="Reichelt J."/>
            <person name="Scharfe M."/>
            <person name="Schoen O."/>
            <person name="Bargues M."/>
            <person name="Terol J."/>
            <person name="Climent J."/>
            <person name="Navarro P."/>
            <person name="Collado C."/>
            <person name="Perez-Perez A."/>
            <person name="Ottenwaelder B."/>
            <person name="Duchemin D."/>
            <person name="Cooke R."/>
            <person name="Laudie M."/>
            <person name="Berger-Llauro C."/>
            <person name="Purnelle B."/>
            <person name="Masuy D."/>
            <person name="de Haan M."/>
            <person name="Maarse A.C."/>
            <person name="Alcaraz J.-P."/>
            <person name="Cottet A."/>
            <person name="Casacuberta E."/>
            <person name="Monfort A."/>
            <person name="Argiriou A."/>
            <person name="Flores M."/>
            <person name="Liguori R."/>
            <person name="Vitale D."/>
            <person name="Mannhaupt G."/>
            <person name="Haase D."/>
            <person name="Schoof H."/>
            <person name="Rudd S."/>
            <person name="Zaccaria P."/>
            <person name="Mewes H.-W."/>
            <person name="Mayer K.F.X."/>
            <person name="Kaul S."/>
            <person name="Town C.D."/>
            <person name="Koo H.L."/>
            <person name="Tallon L.J."/>
            <person name="Jenkins J."/>
            <person name="Rooney T."/>
            <person name="Rizzo M."/>
            <person name="Walts A."/>
            <person name="Utterback T."/>
            <person name="Fujii C.Y."/>
            <person name="Shea T.P."/>
            <person name="Creasy T.H."/>
            <person name="Haas B."/>
            <person name="Maiti R."/>
            <person name="Wu D."/>
            <person name="Peterson J."/>
            <person name="Van Aken S."/>
            <person name="Pai G."/>
            <person name="Militscher J."/>
            <person name="Sellers P."/>
            <person name="Gill J.E."/>
            <person name="Feldblyum T.V."/>
            <person name="Preuss D."/>
            <person name="Lin X."/>
            <person name="Nierman W.C."/>
            <person name="Salzberg S.L."/>
            <person name="White O."/>
            <person name="Venter J.C."/>
            <person name="Fraser C.M."/>
            <person name="Kaneko T."/>
            <person name="Nakamura Y."/>
            <person name="Sato S."/>
            <person name="Kato T."/>
            <person name="Asamizu E."/>
            <person name="Sasamoto S."/>
            <person name="Kimura T."/>
            <person name="Idesawa K."/>
            <person name="Kawashima K."/>
            <person name="Kishida Y."/>
            <person name="Kiyokawa C."/>
            <person name="Kohara M."/>
            <person name="Matsumoto M."/>
            <person name="Matsuno A."/>
            <person name="Muraki A."/>
            <person name="Nakayama S."/>
            <person name="Nakazaki N."/>
            <person name="Shinpo S."/>
            <person name="Takeuchi C."/>
            <person name="Wada T."/>
            <person name="Watanabe A."/>
            <person name="Yamada M."/>
            <person name="Yasuda M."/>
            <person name="Tabata S."/>
        </authorList>
    </citation>
    <scope>NUCLEOTIDE SEQUENCE [LARGE SCALE GENOMIC DNA]</scope>
    <source>
        <strain>cv. Columbia</strain>
    </source>
</reference>
<reference key="3">
    <citation type="journal article" date="2017" name="Plant J.">
        <title>Araport11: a complete reannotation of the Arabidopsis thaliana reference genome.</title>
        <authorList>
            <person name="Cheng C.Y."/>
            <person name="Krishnakumar V."/>
            <person name="Chan A.P."/>
            <person name="Thibaud-Nissen F."/>
            <person name="Schobel S."/>
            <person name="Town C.D."/>
        </authorList>
    </citation>
    <scope>GENOME REANNOTATION</scope>
    <source>
        <strain>cv. Columbia</strain>
    </source>
</reference>
<reference key="4">
    <citation type="submission" date="2004-09" db="EMBL/GenBank/DDBJ databases">
        <title>Large-scale analysis of RIKEN Arabidopsis full-length (RAFL) cDNAs.</title>
        <authorList>
            <person name="Totoki Y."/>
            <person name="Seki M."/>
            <person name="Ishida J."/>
            <person name="Nakajima M."/>
            <person name="Enju A."/>
            <person name="Kamiya A."/>
            <person name="Narusaka M."/>
            <person name="Shin-i T."/>
            <person name="Nakagawa M."/>
            <person name="Sakamoto N."/>
            <person name="Oishi K."/>
            <person name="Kohara Y."/>
            <person name="Kobayashi M."/>
            <person name="Toyoda A."/>
            <person name="Sakaki Y."/>
            <person name="Sakurai T."/>
            <person name="Iida K."/>
            <person name="Akiyama K."/>
            <person name="Satou M."/>
            <person name="Toyoda T."/>
            <person name="Konagaya A."/>
            <person name="Carninci P."/>
            <person name="Kawai J."/>
            <person name="Hayashizaki Y."/>
            <person name="Shinozaki K."/>
        </authorList>
    </citation>
    <scope>NUCLEOTIDE SEQUENCE [LARGE SCALE MRNA] (ISOFORM 1)</scope>
    <source>
        <strain>cv. Columbia</strain>
    </source>
</reference>
<reference key="5">
    <citation type="submission" date="2006-11" db="EMBL/GenBank/DDBJ databases">
        <title>Arabidopsis ORF clones.</title>
        <authorList>
            <person name="Bautista V.R."/>
            <person name="Kim C.J."/>
            <person name="Chen H."/>
            <person name="Quinitio C."/>
            <person name="Ecker J.R."/>
        </authorList>
    </citation>
    <scope>NUCLEOTIDE SEQUENCE [LARGE SCALE MRNA] (ISOFORM 2)</scope>
    <source>
        <strain>cv. Columbia</strain>
    </source>
</reference>
<reference key="6">
    <citation type="journal article" date="2008" name="Trends Plant Sci.">
        <title>The plant B3 superfamily.</title>
        <authorList>
            <person name="Swaminathan K."/>
            <person name="Peterson K."/>
            <person name="Jack T."/>
        </authorList>
    </citation>
    <scope>GENE FAMILY</scope>
</reference>
<comment type="subcellular location">
    <subcellularLocation>
        <location evidence="1">Nucleus</location>
    </subcellularLocation>
</comment>
<comment type="alternative products">
    <event type="alternative splicing"/>
    <isoform>
        <id>Q8RYD3-1</id>
        <name>1</name>
        <sequence type="displayed"/>
    </isoform>
    <isoform>
        <id>Q8RYD3-2</id>
        <name>2</name>
        <sequence type="described" ref="VSP_037334 VSP_037335"/>
    </isoform>
</comment>
<comment type="miscellaneous">
    <molecule>Isoform 2</molecule>
    <text evidence="3">May be due to an intron retention.</text>
</comment>
<comment type="sequence caution" evidence="3">
    <conflict type="erroneous gene model prediction">
        <sequence resource="EMBL-CDS" id="AAG51450"/>
    </conflict>
</comment>